<gene>
    <name type="ordered locus">SAV0939</name>
</gene>
<comment type="similarity">
    <text evidence="1">Belongs to the UPF0349 family.</text>
</comment>
<name>Y939_STAAM</name>
<dbReference type="EMBL" id="BA000017">
    <property type="protein sequence ID" value="BAB57101.1"/>
    <property type="molecule type" value="Genomic_DNA"/>
</dbReference>
<dbReference type="RefSeq" id="WP_001068337.1">
    <property type="nucleotide sequence ID" value="NC_002758.2"/>
</dbReference>
<dbReference type="SMR" id="Q99VE2"/>
<dbReference type="KEGG" id="sav:SAV0939"/>
<dbReference type="HOGENOM" id="CLU_182025_0_0_9"/>
<dbReference type="PhylomeDB" id="Q99VE2"/>
<dbReference type="Proteomes" id="UP000002481">
    <property type="component" value="Chromosome"/>
</dbReference>
<dbReference type="HAMAP" id="MF_01542">
    <property type="entry name" value="UPF0349"/>
    <property type="match status" value="1"/>
</dbReference>
<dbReference type="InterPro" id="IPR009910">
    <property type="entry name" value="DUF1450"/>
</dbReference>
<dbReference type="InterPro" id="IPR022916">
    <property type="entry name" value="UPF0349"/>
</dbReference>
<dbReference type="NCBIfam" id="NF010190">
    <property type="entry name" value="PRK13669.1"/>
    <property type="match status" value="1"/>
</dbReference>
<dbReference type="Pfam" id="PF07293">
    <property type="entry name" value="DUF1450"/>
    <property type="match status" value="1"/>
</dbReference>
<protein>
    <recommendedName>
        <fullName evidence="1">UPF0349 protein SAV0939</fullName>
    </recommendedName>
</protein>
<organism>
    <name type="scientific">Staphylococcus aureus (strain Mu50 / ATCC 700699)</name>
    <dbReference type="NCBI Taxonomy" id="158878"/>
    <lineage>
        <taxon>Bacteria</taxon>
        <taxon>Bacillati</taxon>
        <taxon>Bacillota</taxon>
        <taxon>Bacilli</taxon>
        <taxon>Bacillales</taxon>
        <taxon>Staphylococcaceae</taxon>
        <taxon>Staphylococcus</taxon>
    </lineage>
</organism>
<reference key="1">
    <citation type="journal article" date="2001" name="Lancet">
        <title>Whole genome sequencing of meticillin-resistant Staphylococcus aureus.</title>
        <authorList>
            <person name="Kuroda M."/>
            <person name="Ohta T."/>
            <person name="Uchiyama I."/>
            <person name="Baba T."/>
            <person name="Yuzawa H."/>
            <person name="Kobayashi I."/>
            <person name="Cui L."/>
            <person name="Oguchi A."/>
            <person name="Aoki K."/>
            <person name="Nagai Y."/>
            <person name="Lian J.-Q."/>
            <person name="Ito T."/>
            <person name="Kanamori M."/>
            <person name="Matsumaru H."/>
            <person name="Maruyama A."/>
            <person name="Murakami H."/>
            <person name="Hosoyama A."/>
            <person name="Mizutani-Ui Y."/>
            <person name="Takahashi N.K."/>
            <person name="Sawano T."/>
            <person name="Inoue R."/>
            <person name="Kaito C."/>
            <person name="Sekimizu K."/>
            <person name="Hirakawa H."/>
            <person name="Kuhara S."/>
            <person name="Goto S."/>
            <person name="Yabuzaki J."/>
            <person name="Kanehisa M."/>
            <person name="Yamashita A."/>
            <person name="Oshima K."/>
            <person name="Furuya K."/>
            <person name="Yoshino C."/>
            <person name="Shiba T."/>
            <person name="Hattori M."/>
            <person name="Ogasawara N."/>
            <person name="Hayashi H."/>
            <person name="Hiramatsu K."/>
        </authorList>
    </citation>
    <scope>NUCLEOTIDE SEQUENCE [LARGE SCALE GENOMIC DNA]</scope>
    <source>
        <strain>Mu50 / ATCC 700699</strain>
    </source>
</reference>
<sequence length="78" mass="8657">MNPIVEFCLSNMAKGGDYVFNQLENDPDVDVLEYGCLTHCGICSAGLYALVNGDIVEGDSPEELLQNIYAHIKETWIF</sequence>
<accession>Q99VE2</accession>
<feature type="chain" id="PRO_0000165895" description="UPF0349 protein SAV0939">
    <location>
        <begin position="1"/>
        <end position="78"/>
    </location>
</feature>
<proteinExistence type="inferred from homology"/>
<evidence type="ECO:0000255" key="1">
    <source>
        <dbReference type="HAMAP-Rule" id="MF_01542"/>
    </source>
</evidence>